<gene>
    <name evidence="1" type="primary">kdpB</name>
    <name type="ordered locus">ECUMN_0779</name>
</gene>
<keyword id="KW-0067">ATP-binding</keyword>
<keyword id="KW-0997">Cell inner membrane</keyword>
<keyword id="KW-1003">Cell membrane</keyword>
<keyword id="KW-0406">Ion transport</keyword>
<keyword id="KW-0460">Magnesium</keyword>
<keyword id="KW-0472">Membrane</keyword>
<keyword id="KW-0479">Metal-binding</keyword>
<keyword id="KW-0547">Nucleotide-binding</keyword>
<keyword id="KW-0597">Phosphoprotein</keyword>
<keyword id="KW-0630">Potassium</keyword>
<keyword id="KW-0633">Potassium transport</keyword>
<keyword id="KW-1278">Translocase</keyword>
<keyword id="KW-0812">Transmembrane</keyword>
<keyword id="KW-1133">Transmembrane helix</keyword>
<keyword id="KW-0813">Transport</keyword>
<sequence>MSRKQLALFEPTLVLQALKEAVKKLNPQAQWRNPVMFIVWIGSLLTTCICIAMASGAMPGNALFSAAISGWLWVTVLFANFAEALAEGRSKAQANSLKGVKKTAFARKLREPKYGAAADKVPADQLRKGDIVLVEAGDIIPCDGEVIEGGASVDESAITGESAPVIRESGGDFASVTGGTRILSDWLVIECSVNPGETFLDRMIAMVEGAQRRKTPNEIALTILLIALTIVFLLATATLWPFSAWGGNAVSVTVLVALLVCLIPTTIGGLLSAIGVAGMSRMLGANVIATSGRAVEAAGDVDVLLLDKTGTITLGNRQASEFIPAQGVEEKTLANAAQLASLADETPEGRSIVILAKQRFNLRERDVQSLHATFVPFTAQSRMSGINIDNRMIRKGSVDAIRRHVEANGGHFPADVDQKVDQVARQGATPLVVVEGSRVLGVIALKDIVKGGIKERFAQLRKMGIKTVMITGDNRLTAAAIAAEAGVDDFLAEATPEAKLALIRQYQAEGRLVAMTGDGTNDAPALAQADVAVAMNSGTQAAKEAGNMVDLDSNPTKLIEVVHIGKQMLMTRGSLTTFSIANDVAKYFAIIPAAFAATYPQLNALNIMRLHSPDSAILSAVIFNALIIVFLIPLALKGVSYKPLTASAMLRRNLWIYGLGGLLVPFIGIKVIDLLLTVCGLV</sequence>
<accession>B7N9U0</accession>
<protein>
    <recommendedName>
        <fullName evidence="1">Potassium-transporting ATPase ATP-binding subunit</fullName>
        <ecNumber evidence="1">7.2.2.6</ecNumber>
    </recommendedName>
    <alternativeName>
        <fullName evidence="1">ATP phosphohydrolase [potassium-transporting] B chain</fullName>
    </alternativeName>
    <alternativeName>
        <fullName evidence="1">Potassium-binding and translocating subunit B</fullName>
    </alternativeName>
    <alternativeName>
        <fullName evidence="1">Potassium-translocating ATPase B chain</fullName>
    </alternativeName>
</protein>
<evidence type="ECO:0000255" key="1">
    <source>
        <dbReference type="HAMAP-Rule" id="MF_00285"/>
    </source>
</evidence>
<reference key="1">
    <citation type="journal article" date="2009" name="PLoS Genet.">
        <title>Organised genome dynamics in the Escherichia coli species results in highly diverse adaptive paths.</title>
        <authorList>
            <person name="Touchon M."/>
            <person name="Hoede C."/>
            <person name="Tenaillon O."/>
            <person name="Barbe V."/>
            <person name="Baeriswyl S."/>
            <person name="Bidet P."/>
            <person name="Bingen E."/>
            <person name="Bonacorsi S."/>
            <person name="Bouchier C."/>
            <person name="Bouvet O."/>
            <person name="Calteau A."/>
            <person name="Chiapello H."/>
            <person name="Clermont O."/>
            <person name="Cruveiller S."/>
            <person name="Danchin A."/>
            <person name="Diard M."/>
            <person name="Dossat C."/>
            <person name="Karoui M.E."/>
            <person name="Frapy E."/>
            <person name="Garry L."/>
            <person name="Ghigo J.M."/>
            <person name="Gilles A.M."/>
            <person name="Johnson J."/>
            <person name="Le Bouguenec C."/>
            <person name="Lescat M."/>
            <person name="Mangenot S."/>
            <person name="Martinez-Jehanne V."/>
            <person name="Matic I."/>
            <person name="Nassif X."/>
            <person name="Oztas S."/>
            <person name="Petit M.A."/>
            <person name="Pichon C."/>
            <person name="Rouy Z."/>
            <person name="Ruf C.S."/>
            <person name="Schneider D."/>
            <person name="Tourret J."/>
            <person name="Vacherie B."/>
            <person name="Vallenet D."/>
            <person name="Medigue C."/>
            <person name="Rocha E.P.C."/>
            <person name="Denamur E."/>
        </authorList>
    </citation>
    <scope>NUCLEOTIDE SEQUENCE [LARGE SCALE GENOMIC DNA]</scope>
    <source>
        <strain>UMN026 / ExPEC</strain>
    </source>
</reference>
<dbReference type="EC" id="7.2.2.6" evidence="1"/>
<dbReference type="EMBL" id="CU928163">
    <property type="protein sequence ID" value="CAR11991.1"/>
    <property type="molecule type" value="Genomic_DNA"/>
</dbReference>
<dbReference type="RefSeq" id="WP_000087926.1">
    <property type="nucleotide sequence ID" value="NC_011751.1"/>
</dbReference>
<dbReference type="RefSeq" id="YP_002411537.1">
    <property type="nucleotide sequence ID" value="NC_011751.1"/>
</dbReference>
<dbReference type="SMR" id="B7N9U0"/>
<dbReference type="STRING" id="585056.ECUMN_0779"/>
<dbReference type="KEGG" id="eum:ECUMN_0779"/>
<dbReference type="PATRIC" id="fig|585056.7.peg.983"/>
<dbReference type="HOGENOM" id="CLU_025728_2_0_6"/>
<dbReference type="Proteomes" id="UP000007097">
    <property type="component" value="Chromosome"/>
</dbReference>
<dbReference type="GO" id="GO:0005886">
    <property type="term" value="C:plasma membrane"/>
    <property type="evidence" value="ECO:0007669"/>
    <property type="project" value="UniProtKB-SubCell"/>
</dbReference>
<dbReference type="GO" id="GO:0005524">
    <property type="term" value="F:ATP binding"/>
    <property type="evidence" value="ECO:0007669"/>
    <property type="project" value="UniProtKB-UniRule"/>
</dbReference>
<dbReference type="GO" id="GO:0016887">
    <property type="term" value="F:ATP hydrolysis activity"/>
    <property type="evidence" value="ECO:0007669"/>
    <property type="project" value="InterPro"/>
</dbReference>
<dbReference type="GO" id="GO:0000287">
    <property type="term" value="F:magnesium ion binding"/>
    <property type="evidence" value="ECO:0007669"/>
    <property type="project" value="UniProtKB-UniRule"/>
</dbReference>
<dbReference type="GO" id="GO:0008556">
    <property type="term" value="F:P-type potassium transmembrane transporter activity"/>
    <property type="evidence" value="ECO:0007669"/>
    <property type="project" value="UniProtKB-UniRule"/>
</dbReference>
<dbReference type="CDD" id="cd02078">
    <property type="entry name" value="P-type_ATPase_K"/>
    <property type="match status" value="1"/>
</dbReference>
<dbReference type="FunFam" id="2.70.150.10:FF:000010">
    <property type="entry name" value="Potassium-transporting ATPase ATP-binding subunit"/>
    <property type="match status" value="1"/>
</dbReference>
<dbReference type="FunFam" id="3.40.1110.10:FF:000007">
    <property type="entry name" value="Potassium-transporting ATPase ATP-binding subunit"/>
    <property type="match status" value="1"/>
</dbReference>
<dbReference type="Gene3D" id="3.40.1110.10">
    <property type="entry name" value="Calcium-transporting ATPase, cytoplasmic domain N"/>
    <property type="match status" value="1"/>
</dbReference>
<dbReference type="Gene3D" id="2.70.150.10">
    <property type="entry name" value="Calcium-transporting ATPase, cytoplasmic transduction domain A"/>
    <property type="match status" value="1"/>
</dbReference>
<dbReference type="Gene3D" id="3.40.50.1000">
    <property type="entry name" value="HAD superfamily/HAD-like"/>
    <property type="match status" value="1"/>
</dbReference>
<dbReference type="HAMAP" id="MF_00285">
    <property type="entry name" value="KdpB"/>
    <property type="match status" value="1"/>
</dbReference>
<dbReference type="InterPro" id="IPR023299">
    <property type="entry name" value="ATPase_P-typ_cyto_dom_N"/>
</dbReference>
<dbReference type="InterPro" id="IPR018303">
    <property type="entry name" value="ATPase_P-typ_P_site"/>
</dbReference>
<dbReference type="InterPro" id="IPR023298">
    <property type="entry name" value="ATPase_P-typ_TM_dom_sf"/>
</dbReference>
<dbReference type="InterPro" id="IPR008250">
    <property type="entry name" value="ATPase_P-typ_transduc_dom_A_sf"/>
</dbReference>
<dbReference type="InterPro" id="IPR036412">
    <property type="entry name" value="HAD-like_sf"/>
</dbReference>
<dbReference type="InterPro" id="IPR023214">
    <property type="entry name" value="HAD_sf"/>
</dbReference>
<dbReference type="InterPro" id="IPR006391">
    <property type="entry name" value="P-type_ATPase_bsu_IA"/>
</dbReference>
<dbReference type="InterPro" id="IPR001757">
    <property type="entry name" value="P_typ_ATPase"/>
</dbReference>
<dbReference type="InterPro" id="IPR044492">
    <property type="entry name" value="P_typ_ATPase_HD_dom"/>
</dbReference>
<dbReference type="NCBIfam" id="TIGR01494">
    <property type="entry name" value="ATPase_P-type"/>
    <property type="match status" value="2"/>
</dbReference>
<dbReference type="NCBIfam" id="TIGR01497">
    <property type="entry name" value="kdpB"/>
    <property type="match status" value="1"/>
</dbReference>
<dbReference type="PANTHER" id="PTHR43743">
    <property type="entry name" value="POTASSIUM-TRANSPORTING ATPASE ATP-BINDING SUBUNIT"/>
    <property type="match status" value="1"/>
</dbReference>
<dbReference type="PANTHER" id="PTHR43743:SF1">
    <property type="entry name" value="POTASSIUM-TRANSPORTING ATPASE ATP-BINDING SUBUNIT"/>
    <property type="match status" value="1"/>
</dbReference>
<dbReference type="Pfam" id="PF00122">
    <property type="entry name" value="E1-E2_ATPase"/>
    <property type="match status" value="1"/>
</dbReference>
<dbReference type="Pfam" id="PF00702">
    <property type="entry name" value="Hydrolase"/>
    <property type="match status" value="1"/>
</dbReference>
<dbReference type="PRINTS" id="PR00119">
    <property type="entry name" value="CATATPASE"/>
</dbReference>
<dbReference type="SFLD" id="SFLDS00003">
    <property type="entry name" value="Haloacid_Dehalogenase"/>
    <property type="match status" value="1"/>
</dbReference>
<dbReference type="SFLD" id="SFLDF00027">
    <property type="entry name" value="p-type_atpase"/>
    <property type="match status" value="1"/>
</dbReference>
<dbReference type="SUPFAM" id="SSF81653">
    <property type="entry name" value="Calcium ATPase, transduction domain A"/>
    <property type="match status" value="1"/>
</dbReference>
<dbReference type="SUPFAM" id="SSF81665">
    <property type="entry name" value="Calcium ATPase, transmembrane domain M"/>
    <property type="match status" value="1"/>
</dbReference>
<dbReference type="SUPFAM" id="SSF56784">
    <property type="entry name" value="HAD-like"/>
    <property type="match status" value="1"/>
</dbReference>
<dbReference type="SUPFAM" id="SSF81660">
    <property type="entry name" value="Metal cation-transporting ATPase, ATP-binding domain N"/>
    <property type="match status" value="1"/>
</dbReference>
<dbReference type="PROSITE" id="PS00154">
    <property type="entry name" value="ATPASE_E1_E2"/>
    <property type="match status" value="1"/>
</dbReference>
<proteinExistence type="inferred from homology"/>
<feature type="chain" id="PRO_1000119411" description="Potassium-transporting ATPase ATP-binding subunit">
    <location>
        <begin position="1"/>
        <end position="682"/>
    </location>
</feature>
<feature type="transmembrane region" description="Helical" evidence="1">
    <location>
        <begin position="34"/>
        <end position="54"/>
    </location>
</feature>
<feature type="transmembrane region" description="Helical" evidence="1">
    <location>
        <begin position="62"/>
        <end position="82"/>
    </location>
</feature>
<feature type="transmembrane region" description="Helical" evidence="1">
    <location>
        <begin position="219"/>
        <end position="239"/>
    </location>
</feature>
<feature type="transmembrane region" description="Helical" evidence="1">
    <location>
        <begin position="254"/>
        <end position="274"/>
    </location>
</feature>
<feature type="transmembrane region" description="Helical" evidence="1">
    <location>
        <begin position="588"/>
        <end position="608"/>
    </location>
</feature>
<feature type="transmembrane region" description="Helical" evidence="1">
    <location>
        <begin position="616"/>
        <end position="636"/>
    </location>
</feature>
<feature type="transmembrane region" description="Helical" evidence="1">
    <location>
        <begin position="656"/>
        <end position="676"/>
    </location>
</feature>
<feature type="active site" description="4-aspartylphosphate intermediate" evidence="1">
    <location>
        <position position="307"/>
    </location>
</feature>
<feature type="binding site" evidence="1">
    <location>
        <position position="344"/>
    </location>
    <ligand>
        <name>ATP</name>
        <dbReference type="ChEBI" id="CHEBI:30616"/>
    </ligand>
</feature>
<feature type="binding site" evidence="1">
    <location>
        <position position="348"/>
    </location>
    <ligand>
        <name>ATP</name>
        <dbReference type="ChEBI" id="CHEBI:30616"/>
    </ligand>
</feature>
<feature type="binding site" evidence="1">
    <location>
        <begin position="377"/>
        <end position="384"/>
    </location>
    <ligand>
        <name>ATP</name>
        <dbReference type="ChEBI" id="CHEBI:30616"/>
    </ligand>
</feature>
<feature type="binding site" evidence="1">
    <location>
        <position position="395"/>
    </location>
    <ligand>
        <name>ATP</name>
        <dbReference type="ChEBI" id="CHEBI:30616"/>
    </ligand>
</feature>
<feature type="binding site" evidence="1">
    <location>
        <position position="518"/>
    </location>
    <ligand>
        <name>Mg(2+)</name>
        <dbReference type="ChEBI" id="CHEBI:18420"/>
    </ligand>
</feature>
<feature type="binding site" evidence="1">
    <location>
        <position position="522"/>
    </location>
    <ligand>
        <name>Mg(2+)</name>
        <dbReference type="ChEBI" id="CHEBI:18420"/>
    </ligand>
</feature>
<name>KDPB_ECOLU</name>
<comment type="function">
    <text evidence="1">Part of the high-affinity ATP-driven potassium transport (or Kdp) system, which catalyzes the hydrolysis of ATP coupled with the electrogenic transport of potassium into the cytoplasm. This subunit is responsible for energy coupling to the transport system and for the release of the potassium ions to the cytoplasm.</text>
</comment>
<comment type="catalytic activity">
    <reaction evidence="1">
        <text>K(+)(out) + ATP + H2O = K(+)(in) + ADP + phosphate + H(+)</text>
        <dbReference type="Rhea" id="RHEA:16777"/>
        <dbReference type="ChEBI" id="CHEBI:15377"/>
        <dbReference type="ChEBI" id="CHEBI:15378"/>
        <dbReference type="ChEBI" id="CHEBI:29103"/>
        <dbReference type="ChEBI" id="CHEBI:30616"/>
        <dbReference type="ChEBI" id="CHEBI:43474"/>
        <dbReference type="ChEBI" id="CHEBI:456216"/>
        <dbReference type="EC" id="7.2.2.6"/>
    </reaction>
    <physiologicalReaction direction="left-to-right" evidence="1">
        <dbReference type="Rhea" id="RHEA:16778"/>
    </physiologicalReaction>
</comment>
<comment type="subunit">
    <text evidence="1">The system is composed of three essential subunits: KdpA, KdpB and KdpC.</text>
</comment>
<comment type="subcellular location">
    <subcellularLocation>
        <location evidence="1">Cell inner membrane</location>
        <topology evidence="1">Multi-pass membrane protein</topology>
    </subcellularLocation>
</comment>
<comment type="similarity">
    <text evidence="1">Belongs to the cation transport ATPase (P-type) (TC 3.A.3) family. Type IA subfamily.</text>
</comment>
<organism>
    <name type="scientific">Escherichia coli O17:K52:H18 (strain UMN026 / ExPEC)</name>
    <dbReference type="NCBI Taxonomy" id="585056"/>
    <lineage>
        <taxon>Bacteria</taxon>
        <taxon>Pseudomonadati</taxon>
        <taxon>Pseudomonadota</taxon>
        <taxon>Gammaproteobacteria</taxon>
        <taxon>Enterobacterales</taxon>
        <taxon>Enterobacteriaceae</taxon>
        <taxon>Escherichia</taxon>
    </lineage>
</organism>